<gene>
    <name type="primary">Anp</name>
    <name type="ORF">GM12868</name>
</gene>
<protein>
    <recommendedName>
        <fullName>Andropin</fullName>
    </recommendedName>
</protein>
<evidence type="ECO:0000255" key="1"/>
<evidence type="ECO:0000305" key="2"/>
<organism>
    <name type="scientific">Drosophila sechellia</name>
    <name type="common">Fruit fly</name>
    <dbReference type="NCBI Taxonomy" id="7238"/>
    <lineage>
        <taxon>Eukaryota</taxon>
        <taxon>Metazoa</taxon>
        <taxon>Ecdysozoa</taxon>
        <taxon>Arthropoda</taxon>
        <taxon>Hexapoda</taxon>
        <taxon>Insecta</taxon>
        <taxon>Pterygota</taxon>
        <taxon>Neoptera</taxon>
        <taxon>Endopterygota</taxon>
        <taxon>Diptera</taxon>
        <taxon>Brachycera</taxon>
        <taxon>Muscomorpha</taxon>
        <taxon>Ephydroidea</taxon>
        <taxon>Drosophilidae</taxon>
        <taxon>Drosophila</taxon>
        <taxon>Sophophora</taxon>
    </lineage>
</organism>
<accession>Q8WSV2</accession>
<accession>B4HZP0</accession>
<accession>P81687</accession>
<name>ANDP_DROSE</name>
<proteinExistence type="evidence at transcript level"/>
<feature type="signal peptide" evidence="1">
    <location>
        <begin position="1"/>
        <end position="23"/>
    </location>
</feature>
<feature type="chain" id="PRO_0000004954" description="Andropin">
    <location>
        <begin position="24"/>
        <end position="57"/>
    </location>
</feature>
<sequence>MKYFVVLVVLALILAITVDPSDAVFIDILDKMENAIHKAAQAGIGLAKPIENMILPK</sequence>
<comment type="function">
    <text>Male-specific peptide with moderate activity against Gram-positive bacteria.</text>
</comment>
<comment type="subcellular location">
    <subcellularLocation>
        <location>Secreted</location>
    </subcellularLocation>
</comment>
<comment type="tissue specificity">
    <text>Ejaculatory duct of adult males.</text>
</comment>
<comment type="induction">
    <text>In response to mating.</text>
</comment>
<comment type="similarity">
    <text evidence="2">Belongs to the andropin family.</text>
</comment>
<dbReference type="EMBL" id="AB047042">
    <property type="protein sequence ID" value="BAB78547.1"/>
    <property type="molecule type" value="Genomic_DNA"/>
</dbReference>
<dbReference type="EMBL" id="CH480819">
    <property type="protein sequence ID" value="EDW53497.1"/>
    <property type="molecule type" value="Genomic_DNA"/>
</dbReference>
<dbReference type="EMBL" id="Y16862">
    <property type="protein sequence ID" value="CAA76482.1"/>
    <property type="molecule type" value="Genomic_DNA"/>
</dbReference>
<dbReference type="SMR" id="Q8WSV2"/>
<dbReference type="STRING" id="7238.Q8WSV2"/>
<dbReference type="EnsemblMetazoa" id="FBtr0195853">
    <property type="protein sequence ID" value="FBpp0194345"/>
    <property type="gene ID" value="FBgn0025847"/>
</dbReference>
<dbReference type="EnsemblMetazoa" id="XM_002037302.2">
    <property type="protein sequence ID" value="XP_002037338.1"/>
    <property type="gene ID" value="LOC6612844"/>
</dbReference>
<dbReference type="GeneID" id="6612844"/>
<dbReference type="KEGG" id="dse:6612844"/>
<dbReference type="HOGENOM" id="CLU_2998613_0_0_1"/>
<dbReference type="OMA" id="VIHNVAK"/>
<dbReference type="OrthoDB" id="64725at7215"/>
<dbReference type="PhylomeDB" id="Q8WSV2"/>
<dbReference type="Proteomes" id="UP000001292">
    <property type="component" value="Unassembled WGS sequence"/>
</dbReference>
<dbReference type="GO" id="GO:0005576">
    <property type="term" value="C:extracellular region"/>
    <property type="evidence" value="ECO:0000250"/>
    <property type="project" value="UniProtKB"/>
</dbReference>
<dbReference type="GO" id="GO:0050830">
    <property type="term" value="P:defense response to Gram-positive bacterium"/>
    <property type="evidence" value="ECO:0000250"/>
    <property type="project" value="UniProtKB"/>
</dbReference>
<dbReference type="GO" id="GO:0045087">
    <property type="term" value="P:innate immune response"/>
    <property type="evidence" value="ECO:0007669"/>
    <property type="project" value="UniProtKB-KW"/>
</dbReference>
<dbReference type="GO" id="GO:0006962">
    <property type="term" value="P:male-specific antibacterial humoral response"/>
    <property type="evidence" value="ECO:0000250"/>
    <property type="project" value="UniProtKB"/>
</dbReference>
<dbReference type="InterPro" id="IPR000875">
    <property type="entry name" value="Cecropin"/>
</dbReference>
<dbReference type="Pfam" id="PF00272">
    <property type="entry name" value="Cecropin"/>
    <property type="match status" value="1"/>
</dbReference>
<reference key="1">
    <citation type="journal article" date="2002" name="J. Mol. Evol.">
        <title>Rapid evolution of the male-specific antibacterial protein andropin gene in Drosophila.</title>
        <authorList>
            <person name="Date-Ito A."/>
            <person name="Kasahara K."/>
            <person name="Sawai H."/>
            <person name="Chigusa S.I."/>
        </authorList>
    </citation>
    <scope>NUCLEOTIDE SEQUENCE [GENOMIC DNA]</scope>
</reference>
<reference key="2">
    <citation type="journal article" date="2007" name="Nature">
        <title>Evolution of genes and genomes on the Drosophila phylogeny.</title>
        <authorList>
            <consortium name="Drosophila 12 genomes consortium"/>
        </authorList>
    </citation>
    <scope>NUCLEOTIDE SEQUENCE [LARGE SCALE GENOMIC DNA]</scope>
    <source>
        <strain>Rob3c / Tucson 14021-0248.25</strain>
    </source>
</reference>
<reference key="3">
    <citation type="journal article" date="1998" name="Genetics">
        <title>Molecular evolution of the Cecropin multigene family in Drosophila: functional genes vs pseudogenes.</title>
        <authorList>
            <person name="Ramos-Onsins S."/>
            <person name="Aguade M."/>
        </authorList>
    </citation>
    <scope>NUCLEOTIDE SEQUENCE [GENOMIC DNA] OF 47-57</scope>
    <source>
        <strain>Montemayor</strain>
    </source>
</reference>
<keyword id="KW-0044">Antibiotic</keyword>
<keyword id="KW-0929">Antimicrobial</keyword>
<keyword id="KW-0391">Immunity</keyword>
<keyword id="KW-0399">Innate immunity</keyword>
<keyword id="KW-1185">Reference proteome</keyword>
<keyword id="KW-0964">Secreted</keyword>
<keyword id="KW-0732">Signal</keyword>